<keyword id="KW-0002">3D-structure</keyword>
<keyword id="KW-0025">Alternative splicing</keyword>
<keyword id="KW-0156">Chromatin regulator</keyword>
<keyword id="KW-0175">Coiled coil</keyword>
<keyword id="KW-0227">DNA damage</keyword>
<keyword id="KW-0234">DNA repair</keyword>
<keyword id="KW-0539">Nucleus</keyword>
<keyword id="KW-0597">Phosphoprotein</keyword>
<keyword id="KW-1185">Reference proteome</keyword>
<feature type="chain" id="PRO_0000278576" description="BRCA1-A complex subunit Abraxas 1">
    <location>
        <begin position="1"/>
        <end position="407"/>
    </location>
</feature>
<feature type="domain" description="MPN" evidence="3">
    <location>
        <begin position="7"/>
        <end position="155"/>
    </location>
</feature>
<feature type="region of interest" description="Disordered" evidence="4">
    <location>
        <begin position="344"/>
        <end position="407"/>
    </location>
</feature>
<feature type="coiled-coil region" evidence="2">
    <location>
        <begin position="209"/>
        <end position="259"/>
    </location>
</feature>
<feature type="short sequence motif" description="pSXXF motif" evidence="6">
    <location>
        <begin position="404"/>
        <end position="407"/>
    </location>
</feature>
<feature type="compositionally biased region" description="Basic and acidic residues" evidence="4">
    <location>
        <begin position="347"/>
        <end position="366"/>
    </location>
</feature>
<feature type="compositionally biased region" description="Acidic residues" evidence="4">
    <location>
        <begin position="388"/>
        <end position="399"/>
    </location>
</feature>
<feature type="modified residue" description="Phosphoserine" evidence="8">
    <location>
        <position position="48"/>
    </location>
</feature>
<feature type="modified residue" description="Phosphoserine" evidence="1">
    <location>
        <position position="384"/>
    </location>
</feature>
<feature type="modified residue" description="Phosphoserine" evidence="1">
    <location>
        <position position="385"/>
    </location>
</feature>
<feature type="modified residue" description="Phosphoserine" evidence="8">
    <location>
        <position position="394"/>
    </location>
</feature>
<feature type="modified residue" description="Phosphoserine" evidence="1">
    <location>
        <position position="404"/>
    </location>
</feature>
<feature type="splice variant" id="VSP_023335" description="In isoform 2." evidence="5">
    <original>SICQKVEQSEREVEKLLMDVNQLKEVRRTQQARA</original>
    <variation>CRLRPEEALVPMDLEAQLRAALVYAKKLNKVNEK</variation>
    <location>
        <begin position="228"/>
        <end position="261"/>
    </location>
</feature>
<feature type="splice variant" id="VSP_023336" description="In isoform 2." evidence="5">
    <location>
        <begin position="262"/>
        <end position="407"/>
    </location>
</feature>
<feature type="sequence conflict" description="In Ref. 1; BAE39607." evidence="6" ref="1">
    <original>K</original>
    <variation>E</variation>
    <location>
        <position position="42"/>
    </location>
</feature>
<feature type="sequence conflict" description="In Ref. 1; BAC25434." evidence="6" ref="1">
    <original>E</original>
    <variation>G</variation>
    <location>
        <position position="211"/>
    </location>
</feature>
<feature type="sequence conflict" description="In Ref. 2; AAH29845." evidence="6" ref="2">
    <original>H</original>
    <variation>Q</variation>
    <location>
        <position position="351"/>
    </location>
</feature>
<organism>
    <name type="scientific">Mus musculus</name>
    <name type="common">Mouse</name>
    <dbReference type="NCBI Taxonomy" id="10090"/>
    <lineage>
        <taxon>Eukaryota</taxon>
        <taxon>Metazoa</taxon>
        <taxon>Chordata</taxon>
        <taxon>Craniata</taxon>
        <taxon>Vertebrata</taxon>
        <taxon>Euteleostomi</taxon>
        <taxon>Mammalia</taxon>
        <taxon>Eutheria</taxon>
        <taxon>Euarchontoglires</taxon>
        <taxon>Glires</taxon>
        <taxon>Rodentia</taxon>
        <taxon>Myomorpha</taxon>
        <taxon>Muroidea</taxon>
        <taxon>Muridae</taxon>
        <taxon>Murinae</taxon>
        <taxon>Mus</taxon>
        <taxon>Mus</taxon>
    </lineage>
</organism>
<comment type="function">
    <text evidence="1">Involved in DNA damage response and double-strand break (DSB) repair. Component of the BRCA1-A complex, acting as a central scaffold protein that assembles the various components of the complex and mediates the recruitment of BRCA1. The BRCA1-A complex specifically recognizes 'Lys-63'-linked ubiquitinated histones H2A and H2AX at DNA lesion sites, leading to target the BRCA1-BARD1 heterodimer to sites of DNA damage at DSBs. This complex also possesses deubiquitinase activity that specifically removes 'Lys-63'-linked ubiquitin on histones H2A and H2AX.</text>
</comment>
<comment type="subunit">
    <text evidence="1">Component of the ARISC complex, at least composed of UIMC1/RAP80, ABRAXAS1, BRCC3/BRCC36, BABAM2 and BABAM1/NBA1. Component of the BRCA1-A complex, at least composed of the BRCA1, BARD1, UIMC1/RAP80, ABRAXAS1, BRCC3/BRCC36, BABAM2 and BABAM1/NBA1. In the complex, interacts directly with UIMC1/RAP80, BRCC3/BRCC36 and BABAM2. Homodimer. Interacts directly (when phosphorylated at Ser-404) with BRCA1. The phosphorylated homodimer can interact directly with two BRCA1 chains, giving rise to a heterotetramer. Binds polyubiquitin.</text>
</comment>
<comment type="subcellular location">
    <subcellularLocation>
        <location evidence="1">Nucleus</location>
    </subcellularLocation>
    <text evidence="1">Localizes at sites of DNA damage at double-strand breaks (DSBs).</text>
</comment>
<comment type="alternative products">
    <event type="alternative splicing"/>
    <isoform>
        <id>Q8BPZ8-1</id>
        <name>1</name>
        <sequence type="displayed"/>
    </isoform>
    <isoform>
        <id>Q8BPZ8-2</id>
        <name>2</name>
        <sequence type="described" ref="VSP_023335 VSP_023336"/>
    </isoform>
</comment>
<comment type="PTM">
    <text evidence="1">Phosphorylation of Ser-404 of the pSXXF motif by ATM or ATR constitutes a specific recognition motif for the BRCT domain of BRCA1.</text>
</comment>
<comment type="similarity">
    <text evidence="6">Belongs to the FAM175 family. Abraxas subfamily.</text>
</comment>
<comment type="sequence caution" evidence="6">
    <conflict type="erroneous initiation">
        <sequence resource="EMBL-CDS" id="AAH29845"/>
    </conflict>
    <text>Truncated N-terminus.</text>
</comment>
<comment type="sequence caution" evidence="6">
    <conflict type="frameshift">
        <sequence resource="EMBL-CDS" id="BAC25434"/>
    </conflict>
</comment>
<comment type="sequence caution" evidence="6">
    <conflict type="erroneous initiation">
        <sequence resource="EMBL-CDS" id="BAE39607"/>
    </conflict>
    <text>Extended N-terminus.</text>
</comment>
<proteinExistence type="evidence at protein level"/>
<evidence type="ECO:0000250" key="1">
    <source>
        <dbReference type="UniProtKB" id="Q6UWZ7"/>
    </source>
</evidence>
<evidence type="ECO:0000255" key="2"/>
<evidence type="ECO:0000255" key="3">
    <source>
        <dbReference type="PROSITE-ProRule" id="PRU01182"/>
    </source>
</evidence>
<evidence type="ECO:0000256" key="4">
    <source>
        <dbReference type="SAM" id="MobiDB-lite"/>
    </source>
</evidence>
<evidence type="ECO:0000303" key="5">
    <source>
    </source>
</evidence>
<evidence type="ECO:0000305" key="6"/>
<evidence type="ECO:0000312" key="7">
    <source>
        <dbReference type="MGI" id="MGI:1917931"/>
    </source>
</evidence>
<evidence type="ECO:0007744" key="8">
    <source>
    </source>
</evidence>
<sequence>MEGESTLGVLSGFVLGALTFHHLNTDSDTEGFLLGEMKGEAKNSITDSQMDNVKVVYTIDIQKYIPCYRLFSFYNSLGEVNEHALKKVLSNVRKTVVGWYKFRRHSDQIMTFREQLLHRNLQTHLSSPELVFLLLTPSITTESCSTHCLEHALYKPQRGLFHRVPLVVTNLGMSDQLGYKTEPASCTSTVFSRAVRTHSSQFFNEDGSLKEVHKINEMYAAVQEELKSICQKVEQSEREVEKLLMDVNQLKEVRRTQQARATGAGEKNVQRNPQENILLCQALRTFFPESEVLHSCVISLKNRHISPSGCNVNHHVDVVDQLTLMVEYVYSPEASPVPTAQLRKRKALDTHDQGSVKRPRLLETESRPSVAASRSRHQDKASSSSLDIDIEMGSPEDDADYPRSPTF</sequence>
<dbReference type="EMBL" id="AK014420">
    <property type="protein sequence ID" value="BAC25434.1"/>
    <property type="status" value="ALT_FRAME"/>
    <property type="molecule type" value="mRNA"/>
</dbReference>
<dbReference type="EMBL" id="AK042001">
    <property type="protein sequence ID" value="BAC31129.1"/>
    <property type="molecule type" value="mRNA"/>
</dbReference>
<dbReference type="EMBL" id="AK042339">
    <property type="protein sequence ID" value="BAC31229.1"/>
    <property type="molecule type" value="mRNA"/>
</dbReference>
<dbReference type="EMBL" id="AK051816">
    <property type="protein sequence ID" value="BAC34780.1"/>
    <property type="molecule type" value="mRNA"/>
</dbReference>
<dbReference type="EMBL" id="AK167540">
    <property type="protein sequence ID" value="BAE39607.1"/>
    <property type="status" value="ALT_INIT"/>
    <property type="molecule type" value="mRNA"/>
</dbReference>
<dbReference type="EMBL" id="BC029845">
    <property type="protein sequence ID" value="AAH29845.1"/>
    <property type="status" value="ALT_INIT"/>
    <property type="molecule type" value="mRNA"/>
</dbReference>
<dbReference type="CCDS" id="CCDS19469.1">
    <molecule id="Q8BPZ8-1"/>
</dbReference>
<dbReference type="RefSeq" id="NP_765993.1">
    <molecule id="Q8BPZ8-1"/>
    <property type="nucleotide sequence ID" value="NM_172405.4"/>
</dbReference>
<dbReference type="PDB" id="6GVW">
    <property type="method" value="X-ray"/>
    <property type="resolution" value="3.75 A"/>
    <property type="chains" value="A/F=1-407"/>
</dbReference>
<dbReference type="PDBsum" id="6GVW"/>
<dbReference type="SMR" id="Q8BPZ8"/>
<dbReference type="BioGRID" id="214200">
    <property type="interactions" value="1"/>
</dbReference>
<dbReference type="ComplexPortal" id="CPX-4702">
    <property type="entry name" value="BRCA1-A complex"/>
</dbReference>
<dbReference type="FunCoup" id="Q8BPZ8">
    <property type="interactions" value="2841"/>
</dbReference>
<dbReference type="STRING" id="10090.ENSMUSP00000055895"/>
<dbReference type="iPTMnet" id="Q8BPZ8"/>
<dbReference type="PhosphoSitePlus" id="Q8BPZ8"/>
<dbReference type="PaxDb" id="10090-ENSMUSP00000055895"/>
<dbReference type="PeptideAtlas" id="Q8BPZ8"/>
<dbReference type="ProteomicsDB" id="285966">
    <molecule id="Q8BPZ8-1"/>
</dbReference>
<dbReference type="ProteomicsDB" id="285967">
    <molecule id="Q8BPZ8-2"/>
</dbReference>
<dbReference type="Pumba" id="Q8BPZ8"/>
<dbReference type="Antibodypedia" id="25225">
    <property type="antibodies" value="195 antibodies from 33 providers"/>
</dbReference>
<dbReference type="Ensembl" id="ENSMUST00000044535.14">
    <molecule id="Q8BPZ8-2"/>
    <property type="protein sequence ID" value="ENSMUSP00000047692.8"/>
    <property type="gene ID" value="ENSMUSG00000035234.19"/>
</dbReference>
<dbReference type="Ensembl" id="ENSMUST00000055245.13">
    <molecule id="Q8BPZ8-1"/>
    <property type="protein sequence ID" value="ENSMUSP00000055895.7"/>
    <property type="gene ID" value="ENSMUSG00000035234.19"/>
</dbReference>
<dbReference type="Ensembl" id="ENSMUST00000117364.8">
    <molecule id="Q8BPZ8-1"/>
    <property type="protein sequence ID" value="ENSMUSP00000114050.2"/>
    <property type="gene ID" value="ENSMUSG00000035234.19"/>
</dbReference>
<dbReference type="Ensembl" id="ENSMUST00000200657.5">
    <molecule id="Q8BPZ8-1"/>
    <property type="protein sequence ID" value="ENSMUSP00000143465.2"/>
    <property type="gene ID" value="ENSMUSG00000035234.19"/>
</dbReference>
<dbReference type="GeneID" id="70681"/>
<dbReference type="KEGG" id="mmu:70681"/>
<dbReference type="UCSC" id="uc008yid.1">
    <molecule id="Q8BPZ8-1"/>
    <property type="organism name" value="mouse"/>
</dbReference>
<dbReference type="AGR" id="MGI:1917931"/>
<dbReference type="CTD" id="84142"/>
<dbReference type="MGI" id="MGI:1917931">
    <property type="gene designation" value="Abraxas1"/>
</dbReference>
<dbReference type="VEuPathDB" id="HostDB:ENSMUSG00000035234"/>
<dbReference type="eggNOG" id="ENOG502QVCD">
    <property type="taxonomic scope" value="Eukaryota"/>
</dbReference>
<dbReference type="GeneTree" id="ENSGT00530000063424"/>
<dbReference type="HOGENOM" id="CLU_056671_0_0_1"/>
<dbReference type="InParanoid" id="Q8BPZ8"/>
<dbReference type="OMA" id="MEYAAFI"/>
<dbReference type="OrthoDB" id="6358435at2759"/>
<dbReference type="PhylomeDB" id="Q8BPZ8"/>
<dbReference type="TreeFam" id="TF331751"/>
<dbReference type="Reactome" id="R-MMU-5689901">
    <property type="pathway name" value="Metalloprotease DUBs"/>
</dbReference>
<dbReference type="Reactome" id="R-MMU-5693565">
    <property type="pathway name" value="Recruitment and ATM-mediated phosphorylation of repair and signaling proteins at DNA double strand breaks"/>
</dbReference>
<dbReference type="Reactome" id="R-MMU-5693571">
    <property type="pathway name" value="Nonhomologous End-Joining (NHEJ)"/>
</dbReference>
<dbReference type="Reactome" id="R-MMU-5693607">
    <property type="pathway name" value="Processing of DNA double-strand break ends"/>
</dbReference>
<dbReference type="Reactome" id="R-MMU-69473">
    <property type="pathway name" value="G2/M DNA damage checkpoint"/>
</dbReference>
<dbReference type="BioGRID-ORCS" id="70681">
    <property type="hits" value="19 hits in 116 CRISPR screens"/>
</dbReference>
<dbReference type="ChiTaRS" id="Abraxas1">
    <property type="organism name" value="mouse"/>
</dbReference>
<dbReference type="PRO" id="PR:Q8BPZ8"/>
<dbReference type="Proteomes" id="UP000000589">
    <property type="component" value="Chromosome 5"/>
</dbReference>
<dbReference type="RNAct" id="Q8BPZ8">
    <property type="molecule type" value="protein"/>
</dbReference>
<dbReference type="Bgee" id="ENSMUSG00000035234">
    <property type="expression patterns" value="Expressed in animal zygote and 161 other cell types or tissues"/>
</dbReference>
<dbReference type="ExpressionAtlas" id="Q8BPZ8">
    <property type="expression patterns" value="baseline and differential"/>
</dbReference>
<dbReference type="GO" id="GO:0070531">
    <property type="term" value="C:BRCA1-A complex"/>
    <property type="evidence" value="ECO:0000250"/>
    <property type="project" value="UniProtKB"/>
</dbReference>
<dbReference type="GO" id="GO:0016604">
    <property type="term" value="C:nuclear body"/>
    <property type="evidence" value="ECO:0007669"/>
    <property type="project" value="Ensembl"/>
</dbReference>
<dbReference type="GO" id="GO:0005634">
    <property type="term" value="C:nucleus"/>
    <property type="evidence" value="ECO:0000250"/>
    <property type="project" value="UniProtKB"/>
</dbReference>
<dbReference type="GO" id="GO:0031593">
    <property type="term" value="F:polyubiquitin modification-dependent protein binding"/>
    <property type="evidence" value="ECO:0000250"/>
    <property type="project" value="UniProtKB"/>
</dbReference>
<dbReference type="GO" id="GO:0006325">
    <property type="term" value="P:chromatin organization"/>
    <property type="evidence" value="ECO:0007669"/>
    <property type="project" value="UniProtKB-KW"/>
</dbReference>
<dbReference type="GO" id="GO:0006302">
    <property type="term" value="P:double-strand break repair"/>
    <property type="evidence" value="ECO:0000250"/>
    <property type="project" value="UniProtKB"/>
</dbReference>
<dbReference type="GO" id="GO:0007095">
    <property type="term" value="P:mitotic G2 DNA damage checkpoint signaling"/>
    <property type="evidence" value="ECO:0000250"/>
    <property type="project" value="UniProtKB"/>
</dbReference>
<dbReference type="GO" id="GO:0044818">
    <property type="term" value="P:mitotic G2/M transition checkpoint"/>
    <property type="evidence" value="ECO:0000303"/>
    <property type="project" value="ComplexPortal"/>
</dbReference>
<dbReference type="GO" id="GO:0045739">
    <property type="term" value="P:positive regulation of DNA repair"/>
    <property type="evidence" value="ECO:0000250"/>
    <property type="project" value="UniProtKB"/>
</dbReference>
<dbReference type="GO" id="GO:0006282">
    <property type="term" value="P:regulation of DNA repair"/>
    <property type="evidence" value="ECO:0000303"/>
    <property type="project" value="ComplexPortal"/>
</dbReference>
<dbReference type="GO" id="GO:0010212">
    <property type="term" value="P:response to ionizing radiation"/>
    <property type="evidence" value="ECO:0000250"/>
    <property type="project" value="UniProtKB"/>
</dbReference>
<dbReference type="CDD" id="cd23523">
    <property type="entry name" value="Abraxas_1"/>
    <property type="match status" value="1"/>
</dbReference>
<dbReference type="InterPro" id="IPR023239">
    <property type="entry name" value="BRISC_Abraxas1"/>
</dbReference>
<dbReference type="InterPro" id="IPR023238">
    <property type="entry name" value="FAM175"/>
</dbReference>
<dbReference type="InterPro" id="IPR037518">
    <property type="entry name" value="MPN"/>
</dbReference>
<dbReference type="PANTHER" id="PTHR31728">
    <property type="entry name" value="ABRAXAS FAMILY MEMBER"/>
    <property type="match status" value="1"/>
</dbReference>
<dbReference type="PANTHER" id="PTHR31728:SF2">
    <property type="entry name" value="BRCA1-A COMPLEX SUBUNIT ABRAXAS 1"/>
    <property type="match status" value="1"/>
</dbReference>
<dbReference type="Pfam" id="PF21125">
    <property type="entry name" value="MPN_2A_DUB_like"/>
    <property type="match status" value="1"/>
</dbReference>
<dbReference type="PRINTS" id="PR02052">
    <property type="entry name" value="ABRAXAS"/>
</dbReference>
<dbReference type="PRINTS" id="PR02051">
    <property type="entry name" value="PROTEINF175"/>
</dbReference>
<dbReference type="PROSITE" id="PS50249">
    <property type="entry name" value="MPN"/>
    <property type="match status" value="1"/>
</dbReference>
<name>ABRX1_MOUSE</name>
<accession>Q8BPZ8</accession>
<accession>Q3TJ88</accession>
<accession>Q8BFV6</accession>
<accession>Q8BT69</accession>
<accession>Q8K2T7</accession>
<protein>
    <recommendedName>
        <fullName evidence="7">BRCA1-A complex subunit Abraxas 1</fullName>
    </recommendedName>
    <alternativeName>
        <fullName>Coiled-coil domain-containing protein 98</fullName>
    </alternativeName>
    <alternativeName>
        <fullName>Protein FAM175A</fullName>
    </alternativeName>
</protein>
<reference key="1">
    <citation type="journal article" date="2005" name="Science">
        <title>The transcriptional landscape of the mammalian genome.</title>
        <authorList>
            <person name="Carninci P."/>
            <person name="Kasukawa T."/>
            <person name="Katayama S."/>
            <person name="Gough J."/>
            <person name="Frith M.C."/>
            <person name="Maeda N."/>
            <person name="Oyama R."/>
            <person name="Ravasi T."/>
            <person name="Lenhard B."/>
            <person name="Wells C."/>
            <person name="Kodzius R."/>
            <person name="Shimokawa K."/>
            <person name="Bajic V.B."/>
            <person name="Brenner S.E."/>
            <person name="Batalov S."/>
            <person name="Forrest A.R."/>
            <person name="Zavolan M."/>
            <person name="Davis M.J."/>
            <person name="Wilming L.G."/>
            <person name="Aidinis V."/>
            <person name="Allen J.E."/>
            <person name="Ambesi-Impiombato A."/>
            <person name="Apweiler R."/>
            <person name="Aturaliya R.N."/>
            <person name="Bailey T.L."/>
            <person name="Bansal M."/>
            <person name="Baxter L."/>
            <person name="Beisel K.W."/>
            <person name="Bersano T."/>
            <person name="Bono H."/>
            <person name="Chalk A.M."/>
            <person name="Chiu K.P."/>
            <person name="Choudhary V."/>
            <person name="Christoffels A."/>
            <person name="Clutterbuck D.R."/>
            <person name="Crowe M.L."/>
            <person name="Dalla E."/>
            <person name="Dalrymple B.P."/>
            <person name="de Bono B."/>
            <person name="Della Gatta G."/>
            <person name="di Bernardo D."/>
            <person name="Down T."/>
            <person name="Engstrom P."/>
            <person name="Fagiolini M."/>
            <person name="Faulkner G."/>
            <person name="Fletcher C.F."/>
            <person name="Fukushima T."/>
            <person name="Furuno M."/>
            <person name="Futaki S."/>
            <person name="Gariboldi M."/>
            <person name="Georgii-Hemming P."/>
            <person name="Gingeras T.R."/>
            <person name="Gojobori T."/>
            <person name="Green R.E."/>
            <person name="Gustincich S."/>
            <person name="Harbers M."/>
            <person name="Hayashi Y."/>
            <person name="Hensch T.K."/>
            <person name="Hirokawa N."/>
            <person name="Hill D."/>
            <person name="Huminiecki L."/>
            <person name="Iacono M."/>
            <person name="Ikeo K."/>
            <person name="Iwama A."/>
            <person name="Ishikawa T."/>
            <person name="Jakt M."/>
            <person name="Kanapin A."/>
            <person name="Katoh M."/>
            <person name="Kawasawa Y."/>
            <person name="Kelso J."/>
            <person name="Kitamura H."/>
            <person name="Kitano H."/>
            <person name="Kollias G."/>
            <person name="Krishnan S.P."/>
            <person name="Kruger A."/>
            <person name="Kummerfeld S.K."/>
            <person name="Kurochkin I.V."/>
            <person name="Lareau L.F."/>
            <person name="Lazarevic D."/>
            <person name="Lipovich L."/>
            <person name="Liu J."/>
            <person name="Liuni S."/>
            <person name="McWilliam S."/>
            <person name="Madan Babu M."/>
            <person name="Madera M."/>
            <person name="Marchionni L."/>
            <person name="Matsuda H."/>
            <person name="Matsuzawa S."/>
            <person name="Miki H."/>
            <person name="Mignone F."/>
            <person name="Miyake S."/>
            <person name="Morris K."/>
            <person name="Mottagui-Tabar S."/>
            <person name="Mulder N."/>
            <person name="Nakano N."/>
            <person name="Nakauchi H."/>
            <person name="Ng P."/>
            <person name="Nilsson R."/>
            <person name="Nishiguchi S."/>
            <person name="Nishikawa S."/>
            <person name="Nori F."/>
            <person name="Ohara O."/>
            <person name="Okazaki Y."/>
            <person name="Orlando V."/>
            <person name="Pang K.C."/>
            <person name="Pavan W.J."/>
            <person name="Pavesi G."/>
            <person name="Pesole G."/>
            <person name="Petrovsky N."/>
            <person name="Piazza S."/>
            <person name="Reed J."/>
            <person name="Reid J.F."/>
            <person name="Ring B.Z."/>
            <person name="Ringwald M."/>
            <person name="Rost B."/>
            <person name="Ruan Y."/>
            <person name="Salzberg S.L."/>
            <person name="Sandelin A."/>
            <person name="Schneider C."/>
            <person name="Schoenbach C."/>
            <person name="Sekiguchi K."/>
            <person name="Semple C.A."/>
            <person name="Seno S."/>
            <person name="Sessa L."/>
            <person name="Sheng Y."/>
            <person name="Shibata Y."/>
            <person name="Shimada H."/>
            <person name="Shimada K."/>
            <person name="Silva D."/>
            <person name="Sinclair B."/>
            <person name="Sperling S."/>
            <person name="Stupka E."/>
            <person name="Sugiura K."/>
            <person name="Sultana R."/>
            <person name="Takenaka Y."/>
            <person name="Taki K."/>
            <person name="Tammoja K."/>
            <person name="Tan S.L."/>
            <person name="Tang S."/>
            <person name="Taylor M.S."/>
            <person name="Tegner J."/>
            <person name="Teichmann S.A."/>
            <person name="Ueda H.R."/>
            <person name="van Nimwegen E."/>
            <person name="Verardo R."/>
            <person name="Wei C.L."/>
            <person name="Yagi K."/>
            <person name="Yamanishi H."/>
            <person name="Zabarovsky E."/>
            <person name="Zhu S."/>
            <person name="Zimmer A."/>
            <person name="Hide W."/>
            <person name="Bult C."/>
            <person name="Grimmond S.M."/>
            <person name="Teasdale R.D."/>
            <person name="Liu E.T."/>
            <person name="Brusic V."/>
            <person name="Quackenbush J."/>
            <person name="Wahlestedt C."/>
            <person name="Mattick J.S."/>
            <person name="Hume D.A."/>
            <person name="Kai C."/>
            <person name="Sasaki D."/>
            <person name="Tomaru Y."/>
            <person name="Fukuda S."/>
            <person name="Kanamori-Katayama M."/>
            <person name="Suzuki M."/>
            <person name="Aoki J."/>
            <person name="Arakawa T."/>
            <person name="Iida J."/>
            <person name="Imamura K."/>
            <person name="Itoh M."/>
            <person name="Kato T."/>
            <person name="Kawaji H."/>
            <person name="Kawagashira N."/>
            <person name="Kawashima T."/>
            <person name="Kojima M."/>
            <person name="Kondo S."/>
            <person name="Konno H."/>
            <person name="Nakano K."/>
            <person name="Ninomiya N."/>
            <person name="Nishio T."/>
            <person name="Okada M."/>
            <person name="Plessy C."/>
            <person name="Shibata K."/>
            <person name="Shiraki T."/>
            <person name="Suzuki S."/>
            <person name="Tagami M."/>
            <person name="Waki K."/>
            <person name="Watahiki A."/>
            <person name="Okamura-Oho Y."/>
            <person name="Suzuki H."/>
            <person name="Kawai J."/>
            <person name="Hayashizaki Y."/>
        </authorList>
    </citation>
    <scope>NUCLEOTIDE SEQUENCE [LARGE SCALE MRNA] (ISOFORMS 1 AND 2)</scope>
    <source>
        <strain>C57BL/6J</strain>
        <tissue>Eye</tissue>
        <tissue>Placenta</tissue>
        <tissue>Thymus</tissue>
    </source>
</reference>
<reference key="2">
    <citation type="journal article" date="2004" name="Genome Res.">
        <title>The status, quality, and expansion of the NIH full-length cDNA project: the Mammalian Gene Collection (MGC).</title>
        <authorList>
            <consortium name="The MGC Project Team"/>
        </authorList>
    </citation>
    <scope>NUCLEOTIDE SEQUENCE [LARGE SCALE MRNA] (ISOFORM 1)</scope>
    <source>
        <strain>Czech II</strain>
        <tissue>Mammary tumor</tissue>
    </source>
</reference>
<reference key="3">
    <citation type="journal article" date="2010" name="Cell">
        <title>A tissue-specific atlas of mouse protein phosphorylation and expression.</title>
        <authorList>
            <person name="Huttlin E.L."/>
            <person name="Jedrychowski M.P."/>
            <person name="Elias J.E."/>
            <person name="Goswami T."/>
            <person name="Rad R."/>
            <person name="Beausoleil S.A."/>
            <person name="Villen J."/>
            <person name="Haas W."/>
            <person name="Sowa M.E."/>
            <person name="Gygi S.P."/>
        </authorList>
    </citation>
    <scope>PHOSPHORYLATION [LARGE SCALE ANALYSIS] AT SER-48 AND SER-394</scope>
    <scope>IDENTIFICATION BY MASS SPECTROMETRY [LARGE SCALE ANALYSIS]</scope>
    <source>
        <tissue>Testis</tissue>
    </source>
</reference>
<gene>
    <name evidence="7" type="primary">Abraxas1</name>
    <name type="synonym">Abra1</name>
    <name type="synonym">Ccdc98</name>
    <name type="synonym">Fam175a</name>
</gene>